<evidence type="ECO:0000255" key="1">
    <source>
        <dbReference type="HAMAP-Rule" id="MF_04072"/>
    </source>
</evidence>
<evidence type="ECO:0000305" key="2"/>
<organism>
    <name type="scientific">Influenza A virus (strain A/Mallard/New York/6750/1978 H2N2)</name>
    <dbReference type="NCBI Taxonomy" id="384502"/>
    <lineage>
        <taxon>Viruses</taxon>
        <taxon>Riboviria</taxon>
        <taxon>Orthornavirae</taxon>
        <taxon>Negarnaviricota</taxon>
        <taxon>Polyploviricotina</taxon>
        <taxon>Insthoviricetes</taxon>
        <taxon>Articulavirales</taxon>
        <taxon>Orthomyxoviridae</taxon>
        <taxon>Alphainfluenzavirus</taxon>
        <taxon>Alphainfluenzavirus influenzae</taxon>
        <taxon>Influenza A virus</taxon>
    </lineage>
</organism>
<comment type="function">
    <text evidence="1">Binds to sialic acid-containing receptors on the cell surface, bringing about the attachment of the virus particle to the cell. This attachment induces virion internalization either through clathrin-dependent endocytosis or through clathrin- and caveolin-independent pathway. Plays a major role in the determination of host range restriction and virulence. Class I viral fusion protein. Responsible for penetration of the virus into the cell cytoplasm by mediating the fusion of the membrane of the endocytosed virus particle with the endosomal membrane. Low pH in endosomes induces an irreversible conformational change in HA2, releasing the fusion hydrophobic peptide. Several trimers are required to form a competent fusion pore.</text>
</comment>
<comment type="subunit">
    <text evidence="1">Homotrimer of disulfide-linked HA1-HA2.</text>
</comment>
<comment type="subcellular location">
    <subcellularLocation>
        <location evidence="1">Virion membrane</location>
        <topology evidence="1">Single-pass type I membrane protein</topology>
    </subcellularLocation>
    <subcellularLocation>
        <location evidence="1">Host apical cell membrane</location>
        <topology evidence="1">Single-pass type I membrane protein</topology>
    </subcellularLocation>
    <text evidence="1">Targeted to the apical plasma membrane in epithelial polarized cells through a signal present in the transmembrane domain. Associated with glycosphingolipid- and cholesterol-enriched detergent-resistant lipid rafts.</text>
</comment>
<comment type="PTM">
    <text evidence="1">Palmitoylated.</text>
</comment>
<comment type="PTM">
    <text evidence="1">In natural infection, inactive HA is matured into HA1 and HA2 outside the cell by one or more trypsin-like, arginine-specific endoprotease secreted by the bronchial epithelial cells. One identified protease that may be involved in this process is secreted in lungs by club cells.</text>
</comment>
<comment type="miscellaneous">
    <text>Major glycoprotein, comprises over 80% of the envelope proteins present in virus particle.</text>
</comment>
<comment type="miscellaneous">
    <text>The extent of infection into host organism is determined by HA. Influenza viruses bud from the apical surface of polarized epithelial cells (e.g. bronchial epithelial cells) into lumen of lungs and are therefore usually pneumotropic. The reason is that HA is cleaved by tryptase clara which is restricted to lungs. However, HAs of H5 and H7 pantropic avian viruses subtypes can be cleaved by furin and subtilisin-type enzymes, allowing the virus to grow in other organs than lungs.</text>
</comment>
<comment type="miscellaneous">
    <text evidence="2">The influenza A genome consist of 8 RNA segments. Genetic variation of hemagglutinin and/or neuraminidase genes results in the emergence of new influenza strains. The mechanism of variation can be the result of point mutations or the result of genetic reassortment between segments of two different strains.</text>
</comment>
<comment type="similarity">
    <text evidence="1">Belongs to the influenza viruses hemagglutinin family.</text>
</comment>
<organismHost>
    <name type="scientific">Aves</name>
    <dbReference type="NCBI Taxonomy" id="8782"/>
</organismHost>
<organismHost>
    <name type="scientific">Homo sapiens</name>
    <name type="common">Human</name>
    <dbReference type="NCBI Taxonomy" id="9606"/>
</organismHost>
<sequence>MTITFLILLFTVVKGDQICIGYHANNSTEKVDTILERNVTVTHAKDILEKTHNGKLCRLSGIPPLELGDCSIAGWLLGNPECDRLLSVPEWSYIVEKENPANGLCYPGNFNDYEELKHLLTRVTHFEKIKILPRDQWTQHTTTGGSRACAVSGNPSFFRNMVWLTKKGSNYPVAKGSYNNTSGEQMLVIWGIHHPNDDTEQRTLYQNVGTYVSVGTSTLNKRSIPEIATRPKVNGQGGRMEFSWTLLETWDVINFESTGNLIAPEYGFKISKRGSSGIMKTEKTLENCETKCQTPLGAINTTLPFHNIHPLTIGECPKYVKSDRLVLATGLRNVPQIESRGLFGAIAGFIEGGWQGMIDGWYGYHHSNDQGSGYAADKESTQKAIDGITNKVNSVIEKMNTQFEAVGKEFNNLERRLENLNKKMEDGFLDVWTYNAELLVLMENERTLDFHDSNVKNLYDKVRMQLRDNAKEIGNGCFEFYHKCDDECMNSVRNGTYDYPKYEEESKLNRNEIKGVKLSNMGVYQILAIYATVAGSLSLAIMIAGISFWMCSNGSLQCRICI</sequence>
<reference key="1">
    <citation type="journal article" date="1993" name="Virology">
        <title>Origin of the pandemic 1957 H2 influenza A virus and the persistence of its possible progenitors in the avian reservoir.</title>
        <authorList>
            <person name="Schafer J.R."/>
            <person name="Kawaoka Y."/>
            <person name="Bean W.J."/>
            <person name="Suss J."/>
            <person name="Senne D."/>
            <person name="Webster R.G."/>
        </authorList>
    </citation>
    <scope>NUCLEOTIDE SEQUENCE [GENOMIC RNA]</scope>
</reference>
<proteinExistence type="inferred from homology"/>
<feature type="signal peptide" evidence="1">
    <location>
        <begin position="1"/>
        <end position="15"/>
    </location>
</feature>
<feature type="chain" id="PRO_0000440472" description="Hemagglutinin" evidence="1">
    <location>
        <begin position="16"/>
        <end position="562"/>
    </location>
</feature>
<feature type="chain" id="PRO_0000280197" description="Hemagglutinin HA1 chain" evidence="1">
    <location>
        <begin position="16"/>
        <end position="339"/>
    </location>
</feature>
<feature type="chain" id="PRO_0000280198" description="Hemagglutinin HA2 chain" evidence="1">
    <location>
        <begin position="341"/>
        <end position="562"/>
    </location>
</feature>
<feature type="topological domain" description="Extracellular" evidence="1">
    <location>
        <begin position="16"/>
        <end position="525"/>
    </location>
</feature>
<feature type="transmembrane region" description="Helical" evidence="1">
    <location>
        <begin position="526"/>
        <end position="546"/>
    </location>
</feature>
<feature type="topological domain" description="Cytoplasmic" evidence="1">
    <location>
        <begin position="547"/>
        <end position="562"/>
    </location>
</feature>
<feature type="site" description="Cleavage; by host" evidence="1">
    <location>
        <begin position="340"/>
        <end position="341"/>
    </location>
</feature>
<feature type="lipid moiety-binding region" description="S-palmitoyl cysteine; by host" evidence="1">
    <location>
        <position position="551"/>
    </location>
</feature>
<feature type="lipid moiety-binding region" description="S-palmitoyl cysteine; by host" evidence="1">
    <location>
        <position position="558"/>
    </location>
</feature>
<feature type="lipid moiety-binding region" description="S-palmitoyl cysteine; by host" evidence="1">
    <location>
        <position position="561"/>
    </location>
</feature>
<feature type="glycosylation site" description="N-linked (GlcNAc...) asparagine; by host" evidence="1">
    <location>
        <position position="25"/>
    </location>
</feature>
<feature type="glycosylation site" description="N-linked (GlcNAc...) asparagine; by host" evidence="1">
    <location>
        <position position="26"/>
    </location>
</feature>
<feature type="glycosylation site" description="N-linked (GlcNAc...) asparagine; by host" evidence="1">
    <location>
        <position position="38"/>
    </location>
</feature>
<feature type="glycosylation site" description="N-linked (GlcNAc...) asparagine; by host" evidence="1">
    <location>
        <position position="179"/>
    </location>
</feature>
<feature type="glycosylation site" description="N-linked (GlcNAc...) asparagine; by host" evidence="1">
    <location>
        <position position="180"/>
    </location>
</feature>
<feature type="glycosylation site" description="N-linked (GlcNAc...) asparagine; by host" evidence="1">
    <location>
        <position position="300"/>
    </location>
</feature>
<feature type="glycosylation site" description="N-linked (GlcNAc...) asparagine; by host" evidence="1">
    <location>
        <position position="494"/>
    </location>
</feature>
<feature type="disulfide bond" description="Interchain (between HA1 and HA2 chains)" evidence="1">
    <location>
        <begin position="19"/>
        <end position="477"/>
    </location>
</feature>
<feature type="disulfide bond" evidence="1">
    <location>
        <begin position="57"/>
        <end position="288"/>
    </location>
</feature>
<feature type="disulfide bond" evidence="1">
    <location>
        <begin position="70"/>
        <end position="82"/>
    </location>
</feature>
<feature type="disulfide bond" evidence="1">
    <location>
        <begin position="105"/>
        <end position="149"/>
    </location>
</feature>
<feature type="disulfide bond" evidence="1">
    <location>
        <begin position="292"/>
        <end position="316"/>
    </location>
</feature>
<feature type="disulfide bond" evidence="1">
    <location>
        <begin position="484"/>
        <end position="488"/>
    </location>
</feature>
<gene>
    <name evidence="1" type="primary">HA</name>
</gene>
<name>HEMA_I78A3</name>
<accession>Q67282</accession>
<protein>
    <recommendedName>
        <fullName evidence="1">Hemagglutinin</fullName>
    </recommendedName>
    <component>
        <recommendedName>
            <fullName evidence="1">Hemagglutinin HA1 chain</fullName>
        </recommendedName>
    </component>
    <component>
        <recommendedName>
            <fullName evidence="1">Hemagglutinin HA2 chain</fullName>
        </recommendedName>
    </component>
</protein>
<keyword id="KW-1167">Clathrin- and caveolin-independent endocytosis of virus by host</keyword>
<keyword id="KW-1165">Clathrin-mediated endocytosis of virus by host</keyword>
<keyword id="KW-1015">Disulfide bond</keyword>
<keyword id="KW-1170">Fusion of virus membrane with host endosomal membrane</keyword>
<keyword id="KW-1168">Fusion of virus membrane with host membrane</keyword>
<keyword id="KW-0325">Glycoprotein</keyword>
<keyword id="KW-0348">Hemagglutinin</keyword>
<keyword id="KW-1032">Host cell membrane</keyword>
<keyword id="KW-1043">Host membrane</keyword>
<keyword id="KW-0945">Host-virus interaction</keyword>
<keyword id="KW-0449">Lipoprotein</keyword>
<keyword id="KW-0472">Membrane</keyword>
<keyword id="KW-0564">Palmitate</keyword>
<keyword id="KW-0732">Signal</keyword>
<keyword id="KW-0812">Transmembrane</keyword>
<keyword id="KW-1133">Transmembrane helix</keyword>
<keyword id="KW-1161">Viral attachment to host cell</keyword>
<keyword id="KW-0261">Viral envelope protein</keyword>
<keyword id="KW-1162">Viral penetration into host cytoplasm</keyword>
<keyword id="KW-0946">Virion</keyword>
<keyword id="KW-1164">Virus endocytosis by host</keyword>
<keyword id="KW-1160">Virus entry into host cell</keyword>
<dbReference type="EMBL" id="L11137">
    <property type="protein sequence ID" value="AAA43576.1"/>
    <property type="molecule type" value="Genomic_RNA"/>
</dbReference>
<dbReference type="SMR" id="Q67282"/>
<dbReference type="GlyCosmos" id="Q67282">
    <property type="glycosylation" value="7 sites, No reported glycans"/>
</dbReference>
<dbReference type="Proteomes" id="UP000098172">
    <property type="component" value="Genome"/>
</dbReference>
<dbReference type="GO" id="GO:0020002">
    <property type="term" value="C:host cell plasma membrane"/>
    <property type="evidence" value="ECO:0007669"/>
    <property type="project" value="UniProtKB-SubCell"/>
</dbReference>
<dbReference type="GO" id="GO:0016020">
    <property type="term" value="C:membrane"/>
    <property type="evidence" value="ECO:0007669"/>
    <property type="project" value="UniProtKB-UniRule"/>
</dbReference>
<dbReference type="GO" id="GO:0019031">
    <property type="term" value="C:viral envelope"/>
    <property type="evidence" value="ECO:0007669"/>
    <property type="project" value="UniProtKB-UniRule"/>
</dbReference>
<dbReference type="GO" id="GO:0055036">
    <property type="term" value="C:virion membrane"/>
    <property type="evidence" value="ECO:0007669"/>
    <property type="project" value="UniProtKB-SubCell"/>
</dbReference>
<dbReference type="GO" id="GO:0046789">
    <property type="term" value="F:host cell surface receptor binding"/>
    <property type="evidence" value="ECO:0007669"/>
    <property type="project" value="UniProtKB-UniRule"/>
</dbReference>
<dbReference type="GO" id="GO:0075512">
    <property type="term" value="P:clathrin-dependent endocytosis of virus by host cell"/>
    <property type="evidence" value="ECO:0007669"/>
    <property type="project" value="UniProtKB-UniRule"/>
</dbReference>
<dbReference type="GO" id="GO:0039654">
    <property type="term" value="P:fusion of virus membrane with host endosome membrane"/>
    <property type="evidence" value="ECO:0007669"/>
    <property type="project" value="UniProtKB-UniRule"/>
</dbReference>
<dbReference type="GO" id="GO:0019064">
    <property type="term" value="P:fusion of virus membrane with host plasma membrane"/>
    <property type="evidence" value="ECO:0007669"/>
    <property type="project" value="InterPro"/>
</dbReference>
<dbReference type="GO" id="GO:0046761">
    <property type="term" value="P:viral budding from plasma membrane"/>
    <property type="evidence" value="ECO:0007669"/>
    <property type="project" value="UniProtKB-UniRule"/>
</dbReference>
<dbReference type="GO" id="GO:0019062">
    <property type="term" value="P:virion attachment to host cell"/>
    <property type="evidence" value="ECO:0007669"/>
    <property type="project" value="UniProtKB-KW"/>
</dbReference>
<dbReference type="Gene3D" id="3.90.20.10">
    <property type="match status" value="1"/>
</dbReference>
<dbReference type="Gene3D" id="3.90.209.20">
    <property type="match status" value="1"/>
</dbReference>
<dbReference type="HAMAP" id="MF_04072">
    <property type="entry name" value="INFV_HEMA"/>
    <property type="match status" value="1"/>
</dbReference>
<dbReference type="InterPro" id="IPR008980">
    <property type="entry name" value="Capsid_hemagglutn"/>
</dbReference>
<dbReference type="InterPro" id="IPR013828">
    <property type="entry name" value="Hemagglutn_HA1_a/b_dom_sf"/>
</dbReference>
<dbReference type="InterPro" id="IPR000149">
    <property type="entry name" value="Hemagglutn_influenz_A"/>
</dbReference>
<dbReference type="InterPro" id="IPR001364">
    <property type="entry name" value="Hemagglutn_influenz_A/B"/>
</dbReference>
<dbReference type="Pfam" id="PF00509">
    <property type="entry name" value="Hemagglutinin"/>
    <property type="match status" value="1"/>
</dbReference>
<dbReference type="PRINTS" id="PR00330">
    <property type="entry name" value="HEMAGGLUTN1"/>
</dbReference>
<dbReference type="PRINTS" id="PR00329">
    <property type="entry name" value="HEMAGGLUTN12"/>
</dbReference>
<dbReference type="SUPFAM" id="SSF58064">
    <property type="entry name" value="Influenza hemagglutinin (stalk)"/>
    <property type="match status" value="1"/>
</dbReference>
<dbReference type="SUPFAM" id="SSF49818">
    <property type="entry name" value="Viral protein domain"/>
    <property type="match status" value="1"/>
</dbReference>